<accession>A4SX51</accession>
<reference key="1">
    <citation type="journal article" date="2012" name="Stand. Genomic Sci.">
        <title>Complete genome sequence of Polynucleobacter necessarius subsp. asymbioticus type strain (QLW-P1DMWA-1(T)).</title>
        <authorList>
            <person name="Meincke L."/>
            <person name="Copeland A."/>
            <person name="Lapidus A."/>
            <person name="Lucas S."/>
            <person name="Berry K.W."/>
            <person name="Del Rio T.G."/>
            <person name="Hammon N."/>
            <person name="Dalin E."/>
            <person name="Tice H."/>
            <person name="Pitluck S."/>
            <person name="Richardson P."/>
            <person name="Bruce D."/>
            <person name="Goodwin L."/>
            <person name="Han C."/>
            <person name="Tapia R."/>
            <person name="Detter J.C."/>
            <person name="Schmutz J."/>
            <person name="Brettin T."/>
            <person name="Larimer F."/>
            <person name="Land M."/>
            <person name="Hauser L."/>
            <person name="Kyrpides N.C."/>
            <person name="Ivanova N."/>
            <person name="Goker M."/>
            <person name="Woyke T."/>
            <person name="Wu Q.L."/>
            <person name="Pockl M."/>
            <person name="Hahn M.W."/>
            <person name="Klenk H.P."/>
        </authorList>
    </citation>
    <scope>NUCLEOTIDE SEQUENCE [LARGE SCALE GENOMIC DNA]</scope>
    <source>
        <strain>DSM 18221 / CIP 109841 / QLW-P1DMWA-1</strain>
    </source>
</reference>
<protein>
    <recommendedName>
        <fullName evidence="1">4-hydroxy-tetrahydrodipicolinate synthase</fullName>
        <shortName evidence="1">HTPA synthase</shortName>
        <ecNumber evidence="1">4.3.3.7</ecNumber>
    </recommendedName>
</protein>
<organism>
    <name type="scientific">Polynucleobacter asymbioticus (strain DSM 18221 / CIP 109841 / QLW-P1DMWA-1)</name>
    <name type="common">Polynucleobacter necessarius subsp. asymbioticus</name>
    <dbReference type="NCBI Taxonomy" id="312153"/>
    <lineage>
        <taxon>Bacteria</taxon>
        <taxon>Pseudomonadati</taxon>
        <taxon>Pseudomonadota</taxon>
        <taxon>Betaproteobacteria</taxon>
        <taxon>Burkholderiales</taxon>
        <taxon>Burkholderiaceae</taxon>
        <taxon>Polynucleobacter</taxon>
    </lineage>
</organism>
<proteinExistence type="inferred from homology"/>
<evidence type="ECO:0000255" key="1">
    <source>
        <dbReference type="HAMAP-Rule" id="MF_00418"/>
    </source>
</evidence>
<evidence type="ECO:0000305" key="2"/>
<sequence length="307" mass="32877">MTNKAHSQGSKKTIQGSMPAIVTPMFEDGSLDYPGLRALLDWHVSEGSDGIVIVGTSGESPTVSVEEHCELIRVTVEQIAGRIPVIAGTGGNSTQEAIELTHFAKKVGADASLQVVPYYNKPTQEGMYAHFKKIAESVDLPVILYNVPGRTVADMAGDTVVRLAGVPGIIGIKDATGSLERGTLLINDLKRAGHHEFSVFSGDDLTAAMLMLMGGHGNISVTANVAPRLMHELCVAAMSDDVKRTREIQYQLIAVHKAMFIEANPIPVKWALHEMGKITAGIRLPLTPLSSSLREPLKAALKQANLL</sequence>
<name>DAPA_POLAQ</name>
<gene>
    <name evidence="1" type="primary">dapA</name>
    <name type="ordered locus">Pnuc_0847</name>
</gene>
<feature type="chain" id="PRO_0000340977" description="4-hydroxy-tetrahydrodipicolinate synthase">
    <location>
        <begin position="1"/>
        <end position="307"/>
    </location>
</feature>
<feature type="active site" description="Proton donor/acceptor" evidence="1">
    <location>
        <position position="145"/>
    </location>
</feature>
<feature type="active site" description="Schiff-base intermediate with substrate" evidence="1">
    <location>
        <position position="173"/>
    </location>
</feature>
<feature type="binding site" evidence="1">
    <location>
        <position position="57"/>
    </location>
    <ligand>
        <name>pyruvate</name>
        <dbReference type="ChEBI" id="CHEBI:15361"/>
    </ligand>
</feature>
<feature type="binding site" evidence="1">
    <location>
        <position position="219"/>
    </location>
    <ligand>
        <name>pyruvate</name>
        <dbReference type="ChEBI" id="CHEBI:15361"/>
    </ligand>
</feature>
<feature type="site" description="Part of a proton relay during catalysis" evidence="1">
    <location>
        <position position="56"/>
    </location>
</feature>
<feature type="site" description="Part of a proton relay during catalysis" evidence="1">
    <location>
        <position position="119"/>
    </location>
</feature>
<comment type="function">
    <text evidence="1">Catalyzes the condensation of (S)-aspartate-beta-semialdehyde [(S)-ASA] and pyruvate to 4-hydroxy-tetrahydrodipicolinate (HTPA).</text>
</comment>
<comment type="catalytic activity">
    <reaction evidence="1">
        <text>L-aspartate 4-semialdehyde + pyruvate = (2S,4S)-4-hydroxy-2,3,4,5-tetrahydrodipicolinate + H2O + H(+)</text>
        <dbReference type="Rhea" id="RHEA:34171"/>
        <dbReference type="ChEBI" id="CHEBI:15361"/>
        <dbReference type="ChEBI" id="CHEBI:15377"/>
        <dbReference type="ChEBI" id="CHEBI:15378"/>
        <dbReference type="ChEBI" id="CHEBI:67139"/>
        <dbReference type="ChEBI" id="CHEBI:537519"/>
        <dbReference type="EC" id="4.3.3.7"/>
    </reaction>
</comment>
<comment type="pathway">
    <text evidence="1">Amino-acid biosynthesis; L-lysine biosynthesis via DAP pathway; (S)-tetrahydrodipicolinate from L-aspartate: step 3/4.</text>
</comment>
<comment type="subunit">
    <text evidence="1">Homotetramer; dimer of dimers.</text>
</comment>
<comment type="subcellular location">
    <subcellularLocation>
        <location evidence="1">Cytoplasm</location>
    </subcellularLocation>
</comment>
<comment type="similarity">
    <text evidence="1">Belongs to the DapA family.</text>
</comment>
<comment type="caution">
    <text evidence="2">Was originally thought to be a dihydrodipicolinate synthase (DHDPS), catalyzing the condensation of (S)-aspartate-beta-semialdehyde [(S)-ASA] and pyruvate to dihydrodipicolinate (DHDP). However, it was shown in E.coli that the product of the enzymatic reaction is not dihydrodipicolinate but in fact (4S)-4-hydroxy-2,3,4,5-tetrahydro-(2S)-dipicolinic acid (HTPA), and that the consecutive dehydration reaction leading to DHDP is not spontaneous but catalyzed by DapB.</text>
</comment>
<keyword id="KW-0028">Amino-acid biosynthesis</keyword>
<keyword id="KW-0963">Cytoplasm</keyword>
<keyword id="KW-0220">Diaminopimelate biosynthesis</keyword>
<keyword id="KW-0456">Lyase</keyword>
<keyword id="KW-0457">Lysine biosynthesis</keyword>
<keyword id="KW-1185">Reference proteome</keyword>
<keyword id="KW-0704">Schiff base</keyword>
<dbReference type="EC" id="4.3.3.7" evidence="1"/>
<dbReference type="EMBL" id="CP000655">
    <property type="protein sequence ID" value="ABP34065.1"/>
    <property type="molecule type" value="Genomic_DNA"/>
</dbReference>
<dbReference type="SMR" id="A4SX51"/>
<dbReference type="KEGG" id="pnu:Pnuc_0847"/>
<dbReference type="eggNOG" id="COG0329">
    <property type="taxonomic scope" value="Bacteria"/>
</dbReference>
<dbReference type="HOGENOM" id="CLU_049343_7_1_4"/>
<dbReference type="UniPathway" id="UPA00034">
    <property type="reaction ID" value="UER00017"/>
</dbReference>
<dbReference type="Proteomes" id="UP000000231">
    <property type="component" value="Chromosome"/>
</dbReference>
<dbReference type="GO" id="GO:0005829">
    <property type="term" value="C:cytosol"/>
    <property type="evidence" value="ECO:0007669"/>
    <property type="project" value="TreeGrafter"/>
</dbReference>
<dbReference type="GO" id="GO:0008840">
    <property type="term" value="F:4-hydroxy-tetrahydrodipicolinate synthase activity"/>
    <property type="evidence" value="ECO:0007669"/>
    <property type="project" value="UniProtKB-UniRule"/>
</dbReference>
<dbReference type="GO" id="GO:0019877">
    <property type="term" value="P:diaminopimelate biosynthetic process"/>
    <property type="evidence" value="ECO:0007669"/>
    <property type="project" value="UniProtKB-UniRule"/>
</dbReference>
<dbReference type="GO" id="GO:0009089">
    <property type="term" value="P:lysine biosynthetic process via diaminopimelate"/>
    <property type="evidence" value="ECO:0007669"/>
    <property type="project" value="UniProtKB-UniRule"/>
</dbReference>
<dbReference type="CDD" id="cd00950">
    <property type="entry name" value="DHDPS"/>
    <property type="match status" value="1"/>
</dbReference>
<dbReference type="Gene3D" id="3.20.20.70">
    <property type="entry name" value="Aldolase class I"/>
    <property type="match status" value="1"/>
</dbReference>
<dbReference type="HAMAP" id="MF_00418">
    <property type="entry name" value="DapA"/>
    <property type="match status" value="1"/>
</dbReference>
<dbReference type="InterPro" id="IPR013785">
    <property type="entry name" value="Aldolase_TIM"/>
</dbReference>
<dbReference type="InterPro" id="IPR005263">
    <property type="entry name" value="DapA"/>
</dbReference>
<dbReference type="InterPro" id="IPR002220">
    <property type="entry name" value="DapA-like"/>
</dbReference>
<dbReference type="InterPro" id="IPR020625">
    <property type="entry name" value="Schiff_base-form_aldolases_AS"/>
</dbReference>
<dbReference type="NCBIfam" id="TIGR00674">
    <property type="entry name" value="dapA"/>
    <property type="match status" value="1"/>
</dbReference>
<dbReference type="PANTHER" id="PTHR12128:SF66">
    <property type="entry name" value="4-HYDROXY-2-OXOGLUTARATE ALDOLASE, MITOCHONDRIAL"/>
    <property type="match status" value="1"/>
</dbReference>
<dbReference type="PANTHER" id="PTHR12128">
    <property type="entry name" value="DIHYDRODIPICOLINATE SYNTHASE"/>
    <property type="match status" value="1"/>
</dbReference>
<dbReference type="Pfam" id="PF00701">
    <property type="entry name" value="DHDPS"/>
    <property type="match status" value="1"/>
</dbReference>
<dbReference type="PIRSF" id="PIRSF001365">
    <property type="entry name" value="DHDPS"/>
    <property type="match status" value="1"/>
</dbReference>
<dbReference type="PRINTS" id="PR00146">
    <property type="entry name" value="DHPICSNTHASE"/>
</dbReference>
<dbReference type="SMART" id="SM01130">
    <property type="entry name" value="DHDPS"/>
    <property type="match status" value="1"/>
</dbReference>
<dbReference type="SUPFAM" id="SSF51569">
    <property type="entry name" value="Aldolase"/>
    <property type="match status" value="1"/>
</dbReference>
<dbReference type="PROSITE" id="PS00666">
    <property type="entry name" value="DHDPS_2"/>
    <property type="match status" value="1"/>
</dbReference>